<gene>
    <name type="primary">aste1a</name>
    <name type="ORF">si:dkey-11p23.5</name>
</gene>
<comment type="function">
    <text evidence="1">Structure-specific DNA endonuclease that specifically cleaves single-stranded DNA and 3' overhang DNA.</text>
</comment>
<comment type="similarity">
    <text evidence="2">Belongs to the asteroid family.</text>
</comment>
<feature type="chain" id="PRO_0000310461" description="Single-strand DNA endonuclease ASTE1">
    <location>
        <begin position="1"/>
        <end position="692"/>
    </location>
</feature>
<protein>
    <recommendedName>
        <fullName>Single-strand DNA endonuclease ASTE1</fullName>
        <ecNumber>3.1.-.-</ecNumber>
    </recommendedName>
    <alternativeName>
        <fullName>Protein asteroid homolog 1</fullName>
    </alternativeName>
</protein>
<keyword id="KW-0378">Hydrolase</keyword>
<keyword id="KW-1185">Reference proteome</keyword>
<evidence type="ECO:0000250" key="1">
    <source>
        <dbReference type="UniProtKB" id="Q2TB18"/>
    </source>
</evidence>
<evidence type="ECO:0000305" key="2"/>
<proteinExistence type="evidence at transcript level"/>
<sequence length="692" mass="79228">MGVQGLKTYIESSSRNDLKTWAFRDKQLIIDGCNLFYSLCFDSNLDQIHGGDYDTFEKVVRQFFENLSACDVHPYVVIDGGDDHTDKKWDTLLTRKQKKIKDAYDLSVGKRRQVLPLLTEKVFKQVLKKLKVPVVQTLEEADWEIAALAEEWNCPVLSNDSDFYIFNLRAGLLPITHFHWRKVRVNRKTNQKFILSKHFIARKFCKSFKMNVSLLPVFASILGNDYVKLPNIKNRHWERYSNPGSENPQIEGLLNWLSQFSGPDEAISALLRPTSNKTKAQEELSHGIQDYKLVPGSLAQIFRSTKVPQKISKGPLHVLPRWTLRPILDGKMSSYIINVLLHNRASLNAQVEDFQLPSANETSLHIRQVFYGLLLLGEQQTAGKRESVKGTTKRYVVEYSRQQIKRSSENVEAIQTKAMEGLRLETLYQEPHAVRLQVILDTLGVSCEMLKGTPDALQLQMFVTRYWLVNAEPQPCRVHLWGLLLGMVYGKLSSSPNAQKDMLSRLRVKASRKGGSVDIDVAHAYSQWQSCLKYSLNLNYLLSFPLTEPDCASLYRGSLVHQAVGELRRGISLEALLVKGSSAERIFKQLKDIIVSLMGDDFIKKMKSGLEHRDAGKTQRASKGQKDELDIYFEQMMIESIDSEDEELLDVRKSKAKNHLMELPVCPIRARHKAKARNARHPCKKYERRCFE</sequence>
<dbReference type="EC" id="3.1.-.-"/>
<dbReference type="EMBL" id="BX005012">
    <property type="protein sequence ID" value="CAK05130.1"/>
    <property type="molecule type" value="Genomic_DNA"/>
</dbReference>
<dbReference type="EMBL" id="BC163487">
    <property type="protein sequence ID" value="AAI63487.1"/>
    <property type="molecule type" value="mRNA"/>
</dbReference>
<dbReference type="EMBL" id="BC163493">
    <property type="protein sequence ID" value="AAI63493.1"/>
    <property type="molecule type" value="mRNA"/>
</dbReference>
<dbReference type="RefSeq" id="NP_001092900.1">
    <property type="nucleotide sequence ID" value="NM_001099430.2"/>
</dbReference>
<dbReference type="RefSeq" id="XP_005158251.1">
    <property type="nucleotide sequence ID" value="XM_005158194.3"/>
</dbReference>
<dbReference type="FunCoup" id="Q1LYL8">
    <property type="interactions" value="1"/>
</dbReference>
<dbReference type="STRING" id="7955.ENSDARP00000093440"/>
<dbReference type="PaxDb" id="7955-ENSDARP00000106061"/>
<dbReference type="Ensembl" id="ENSDART00000102665">
    <property type="protein sequence ID" value="ENSDARP00000093440"/>
    <property type="gene ID" value="ENSDARG00000070132"/>
</dbReference>
<dbReference type="GeneID" id="100006826"/>
<dbReference type="KEGG" id="dre:100006826"/>
<dbReference type="AGR" id="ZFIN:ZDB-GENE-060503-520"/>
<dbReference type="CTD" id="100006826"/>
<dbReference type="ZFIN" id="ZDB-GENE-060503-520">
    <property type="gene designation" value="aste1a"/>
</dbReference>
<dbReference type="eggNOG" id="ENOG502QQRA">
    <property type="taxonomic scope" value="Eukaryota"/>
</dbReference>
<dbReference type="HOGENOM" id="CLU_017330_1_0_1"/>
<dbReference type="InParanoid" id="Q1LYL8"/>
<dbReference type="OMA" id="DARCWYE"/>
<dbReference type="OrthoDB" id="25987at2759"/>
<dbReference type="PhylomeDB" id="Q1LYL8"/>
<dbReference type="TreeFam" id="TF324582"/>
<dbReference type="PRO" id="PR:Q1LYL8"/>
<dbReference type="Proteomes" id="UP000000437">
    <property type="component" value="Chromosome 16"/>
</dbReference>
<dbReference type="Bgee" id="ENSDARG00000070132">
    <property type="expression patterns" value="Expressed in intestine and 14 other cell types or tissues"/>
</dbReference>
<dbReference type="GO" id="GO:1990599">
    <property type="term" value="F:3' overhang single-stranded DNA endodeoxyribonuclease activity"/>
    <property type="evidence" value="ECO:0000250"/>
    <property type="project" value="UniProtKB"/>
</dbReference>
<dbReference type="GO" id="GO:0000014">
    <property type="term" value="F:single-stranded DNA endodeoxyribonuclease activity"/>
    <property type="evidence" value="ECO:0000250"/>
    <property type="project" value="UniProtKB"/>
</dbReference>
<dbReference type="CDD" id="cd18676">
    <property type="entry name" value="PIN_asteroid-like"/>
    <property type="match status" value="1"/>
</dbReference>
<dbReference type="Gene3D" id="3.40.50.1010">
    <property type="entry name" value="5'-nuclease"/>
    <property type="match status" value="1"/>
</dbReference>
<dbReference type="InterPro" id="IPR026832">
    <property type="entry name" value="Asteroid"/>
</dbReference>
<dbReference type="InterPro" id="IPR029060">
    <property type="entry name" value="PIN-like_dom_sf"/>
</dbReference>
<dbReference type="PANTHER" id="PTHR15665">
    <property type="entry name" value="ASTEROID PROTEIN"/>
    <property type="match status" value="1"/>
</dbReference>
<dbReference type="PANTHER" id="PTHR15665:SF1">
    <property type="entry name" value="PROTEIN ASTEROID HOMOLOG 1"/>
    <property type="match status" value="1"/>
</dbReference>
<dbReference type="SUPFAM" id="SSF88723">
    <property type="entry name" value="PIN domain-like"/>
    <property type="match status" value="1"/>
</dbReference>
<name>ASTE1_DANRE</name>
<accession>Q1LYL8</accession>
<accession>B3DJH6</accession>
<organism>
    <name type="scientific">Danio rerio</name>
    <name type="common">Zebrafish</name>
    <name type="synonym">Brachydanio rerio</name>
    <dbReference type="NCBI Taxonomy" id="7955"/>
    <lineage>
        <taxon>Eukaryota</taxon>
        <taxon>Metazoa</taxon>
        <taxon>Chordata</taxon>
        <taxon>Craniata</taxon>
        <taxon>Vertebrata</taxon>
        <taxon>Euteleostomi</taxon>
        <taxon>Actinopterygii</taxon>
        <taxon>Neopterygii</taxon>
        <taxon>Teleostei</taxon>
        <taxon>Ostariophysi</taxon>
        <taxon>Cypriniformes</taxon>
        <taxon>Danionidae</taxon>
        <taxon>Danioninae</taxon>
        <taxon>Danio</taxon>
    </lineage>
</organism>
<reference key="1">
    <citation type="journal article" date="2013" name="Nature">
        <title>The zebrafish reference genome sequence and its relationship to the human genome.</title>
        <authorList>
            <person name="Howe K."/>
            <person name="Clark M.D."/>
            <person name="Torroja C.F."/>
            <person name="Torrance J."/>
            <person name="Berthelot C."/>
            <person name="Muffato M."/>
            <person name="Collins J.E."/>
            <person name="Humphray S."/>
            <person name="McLaren K."/>
            <person name="Matthews L."/>
            <person name="McLaren S."/>
            <person name="Sealy I."/>
            <person name="Caccamo M."/>
            <person name="Churcher C."/>
            <person name="Scott C."/>
            <person name="Barrett J.C."/>
            <person name="Koch R."/>
            <person name="Rauch G.J."/>
            <person name="White S."/>
            <person name="Chow W."/>
            <person name="Kilian B."/>
            <person name="Quintais L.T."/>
            <person name="Guerra-Assuncao J.A."/>
            <person name="Zhou Y."/>
            <person name="Gu Y."/>
            <person name="Yen J."/>
            <person name="Vogel J.H."/>
            <person name="Eyre T."/>
            <person name="Redmond S."/>
            <person name="Banerjee R."/>
            <person name="Chi J."/>
            <person name="Fu B."/>
            <person name="Langley E."/>
            <person name="Maguire S.F."/>
            <person name="Laird G.K."/>
            <person name="Lloyd D."/>
            <person name="Kenyon E."/>
            <person name="Donaldson S."/>
            <person name="Sehra H."/>
            <person name="Almeida-King J."/>
            <person name="Loveland J."/>
            <person name="Trevanion S."/>
            <person name="Jones M."/>
            <person name="Quail M."/>
            <person name="Willey D."/>
            <person name="Hunt A."/>
            <person name="Burton J."/>
            <person name="Sims S."/>
            <person name="McLay K."/>
            <person name="Plumb B."/>
            <person name="Davis J."/>
            <person name="Clee C."/>
            <person name="Oliver K."/>
            <person name="Clark R."/>
            <person name="Riddle C."/>
            <person name="Elliot D."/>
            <person name="Threadgold G."/>
            <person name="Harden G."/>
            <person name="Ware D."/>
            <person name="Begum S."/>
            <person name="Mortimore B."/>
            <person name="Kerry G."/>
            <person name="Heath P."/>
            <person name="Phillimore B."/>
            <person name="Tracey A."/>
            <person name="Corby N."/>
            <person name="Dunn M."/>
            <person name="Johnson C."/>
            <person name="Wood J."/>
            <person name="Clark S."/>
            <person name="Pelan S."/>
            <person name="Griffiths G."/>
            <person name="Smith M."/>
            <person name="Glithero R."/>
            <person name="Howden P."/>
            <person name="Barker N."/>
            <person name="Lloyd C."/>
            <person name="Stevens C."/>
            <person name="Harley J."/>
            <person name="Holt K."/>
            <person name="Panagiotidis G."/>
            <person name="Lovell J."/>
            <person name="Beasley H."/>
            <person name="Henderson C."/>
            <person name="Gordon D."/>
            <person name="Auger K."/>
            <person name="Wright D."/>
            <person name="Collins J."/>
            <person name="Raisen C."/>
            <person name="Dyer L."/>
            <person name="Leung K."/>
            <person name="Robertson L."/>
            <person name="Ambridge K."/>
            <person name="Leongamornlert D."/>
            <person name="McGuire S."/>
            <person name="Gilderthorp R."/>
            <person name="Griffiths C."/>
            <person name="Manthravadi D."/>
            <person name="Nichol S."/>
            <person name="Barker G."/>
            <person name="Whitehead S."/>
            <person name="Kay M."/>
            <person name="Brown J."/>
            <person name="Murnane C."/>
            <person name="Gray E."/>
            <person name="Humphries M."/>
            <person name="Sycamore N."/>
            <person name="Barker D."/>
            <person name="Saunders D."/>
            <person name="Wallis J."/>
            <person name="Babbage A."/>
            <person name="Hammond S."/>
            <person name="Mashreghi-Mohammadi M."/>
            <person name="Barr L."/>
            <person name="Martin S."/>
            <person name="Wray P."/>
            <person name="Ellington A."/>
            <person name="Matthews N."/>
            <person name="Ellwood M."/>
            <person name="Woodmansey R."/>
            <person name="Clark G."/>
            <person name="Cooper J."/>
            <person name="Tromans A."/>
            <person name="Grafham D."/>
            <person name="Skuce C."/>
            <person name="Pandian R."/>
            <person name="Andrews R."/>
            <person name="Harrison E."/>
            <person name="Kimberley A."/>
            <person name="Garnett J."/>
            <person name="Fosker N."/>
            <person name="Hall R."/>
            <person name="Garner P."/>
            <person name="Kelly D."/>
            <person name="Bird C."/>
            <person name="Palmer S."/>
            <person name="Gehring I."/>
            <person name="Berger A."/>
            <person name="Dooley C.M."/>
            <person name="Ersan-Urun Z."/>
            <person name="Eser C."/>
            <person name="Geiger H."/>
            <person name="Geisler M."/>
            <person name="Karotki L."/>
            <person name="Kirn A."/>
            <person name="Konantz J."/>
            <person name="Konantz M."/>
            <person name="Oberlander M."/>
            <person name="Rudolph-Geiger S."/>
            <person name="Teucke M."/>
            <person name="Lanz C."/>
            <person name="Raddatz G."/>
            <person name="Osoegawa K."/>
            <person name="Zhu B."/>
            <person name="Rapp A."/>
            <person name="Widaa S."/>
            <person name="Langford C."/>
            <person name="Yang F."/>
            <person name="Schuster S.C."/>
            <person name="Carter N.P."/>
            <person name="Harrow J."/>
            <person name="Ning Z."/>
            <person name="Herrero J."/>
            <person name="Searle S.M."/>
            <person name="Enright A."/>
            <person name="Geisler R."/>
            <person name="Plasterk R.H."/>
            <person name="Lee C."/>
            <person name="Westerfield M."/>
            <person name="de Jong P.J."/>
            <person name="Zon L.I."/>
            <person name="Postlethwait J.H."/>
            <person name="Nusslein-Volhard C."/>
            <person name="Hubbard T.J."/>
            <person name="Roest Crollius H."/>
            <person name="Rogers J."/>
            <person name="Stemple D.L."/>
        </authorList>
    </citation>
    <scope>NUCLEOTIDE SEQUENCE [LARGE SCALE GENOMIC DNA]</scope>
    <source>
        <strain>Tuebingen</strain>
    </source>
</reference>
<reference key="2">
    <citation type="submission" date="2008-04" db="EMBL/GenBank/DDBJ databases">
        <authorList>
            <consortium name="NIH - Zebrafish Gene Collection (ZGC) project"/>
        </authorList>
    </citation>
    <scope>NUCLEOTIDE SEQUENCE [LARGE SCALE MRNA]</scope>
</reference>